<organism>
    <name type="scientific">Herpetosiphon aurantiacus (strain ATCC 23779 / DSM 785 / 114-95)</name>
    <dbReference type="NCBI Taxonomy" id="316274"/>
    <lineage>
        <taxon>Bacteria</taxon>
        <taxon>Bacillati</taxon>
        <taxon>Chloroflexota</taxon>
        <taxon>Chloroflexia</taxon>
        <taxon>Herpetosiphonales</taxon>
        <taxon>Herpetosiphonaceae</taxon>
        <taxon>Herpetosiphon</taxon>
    </lineage>
</organism>
<dbReference type="EC" id="4.2.1.33" evidence="1"/>
<dbReference type="EMBL" id="CP000875">
    <property type="protein sequence ID" value="ABX05938.1"/>
    <property type="molecule type" value="Genomic_DNA"/>
</dbReference>
<dbReference type="SMR" id="A9B805"/>
<dbReference type="STRING" id="316274.Haur_3302"/>
<dbReference type="KEGG" id="hau:Haur_3302"/>
<dbReference type="eggNOG" id="COG0065">
    <property type="taxonomic scope" value="Bacteria"/>
</dbReference>
<dbReference type="HOGENOM" id="CLU_006714_3_4_0"/>
<dbReference type="InParanoid" id="A9B805"/>
<dbReference type="UniPathway" id="UPA00048">
    <property type="reaction ID" value="UER00071"/>
</dbReference>
<dbReference type="Proteomes" id="UP000000787">
    <property type="component" value="Chromosome"/>
</dbReference>
<dbReference type="GO" id="GO:0003861">
    <property type="term" value="F:3-isopropylmalate dehydratase activity"/>
    <property type="evidence" value="ECO:0007669"/>
    <property type="project" value="UniProtKB-UniRule"/>
</dbReference>
<dbReference type="GO" id="GO:0051539">
    <property type="term" value="F:4 iron, 4 sulfur cluster binding"/>
    <property type="evidence" value="ECO:0007669"/>
    <property type="project" value="UniProtKB-KW"/>
</dbReference>
<dbReference type="GO" id="GO:0046872">
    <property type="term" value="F:metal ion binding"/>
    <property type="evidence" value="ECO:0007669"/>
    <property type="project" value="UniProtKB-KW"/>
</dbReference>
<dbReference type="GO" id="GO:0009098">
    <property type="term" value="P:L-leucine biosynthetic process"/>
    <property type="evidence" value="ECO:0007669"/>
    <property type="project" value="UniProtKB-UniRule"/>
</dbReference>
<dbReference type="Gene3D" id="3.30.499.10">
    <property type="entry name" value="Aconitase, domain 3"/>
    <property type="match status" value="2"/>
</dbReference>
<dbReference type="HAMAP" id="MF_01027">
    <property type="entry name" value="LeuC_type2"/>
    <property type="match status" value="1"/>
</dbReference>
<dbReference type="InterPro" id="IPR015931">
    <property type="entry name" value="Acnase/IPM_dHydase_lsu_aba_1/3"/>
</dbReference>
<dbReference type="InterPro" id="IPR001030">
    <property type="entry name" value="Acoase/IPM_deHydtase_lsu_aba"/>
</dbReference>
<dbReference type="InterPro" id="IPR018136">
    <property type="entry name" value="Aconitase_4Fe-4S_BS"/>
</dbReference>
<dbReference type="InterPro" id="IPR036008">
    <property type="entry name" value="Aconitase_4Fe-4S_dom"/>
</dbReference>
<dbReference type="InterPro" id="IPR011826">
    <property type="entry name" value="HAcnase/IPMdehydase_lsu_prok"/>
</dbReference>
<dbReference type="InterPro" id="IPR006251">
    <property type="entry name" value="Homoacnase/IPMdehydase_lsu"/>
</dbReference>
<dbReference type="InterPro" id="IPR050067">
    <property type="entry name" value="IPM_dehydratase_rel_enz"/>
</dbReference>
<dbReference type="NCBIfam" id="TIGR01343">
    <property type="entry name" value="hacA_fam"/>
    <property type="match status" value="1"/>
</dbReference>
<dbReference type="NCBIfam" id="TIGR02086">
    <property type="entry name" value="IPMI_arch"/>
    <property type="match status" value="1"/>
</dbReference>
<dbReference type="NCBIfam" id="NF001614">
    <property type="entry name" value="PRK00402.1"/>
    <property type="match status" value="1"/>
</dbReference>
<dbReference type="PANTHER" id="PTHR43822:SF21">
    <property type="entry name" value="3-ISOPROPYLMALATE DEHYDRATASE LARGE SUBUNIT 1"/>
    <property type="match status" value="1"/>
</dbReference>
<dbReference type="PANTHER" id="PTHR43822">
    <property type="entry name" value="HOMOACONITASE, MITOCHONDRIAL-RELATED"/>
    <property type="match status" value="1"/>
</dbReference>
<dbReference type="Pfam" id="PF00330">
    <property type="entry name" value="Aconitase"/>
    <property type="match status" value="2"/>
</dbReference>
<dbReference type="PRINTS" id="PR00415">
    <property type="entry name" value="ACONITASE"/>
</dbReference>
<dbReference type="SUPFAM" id="SSF53732">
    <property type="entry name" value="Aconitase iron-sulfur domain"/>
    <property type="match status" value="1"/>
</dbReference>
<dbReference type="PROSITE" id="PS00450">
    <property type="entry name" value="ACONITASE_1"/>
    <property type="match status" value="1"/>
</dbReference>
<dbReference type="PROSITE" id="PS01244">
    <property type="entry name" value="ACONITASE_2"/>
    <property type="match status" value="1"/>
</dbReference>
<feature type="chain" id="PRO_1000135734" description="3-isopropylmalate dehydratase large subunit">
    <location>
        <begin position="1"/>
        <end position="421"/>
    </location>
</feature>
<feature type="binding site" evidence="1">
    <location>
        <position position="292"/>
    </location>
    <ligand>
        <name>[4Fe-4S] cluster</name>
        <dbReference type="ChEBI" id="CHEBI:49883"/>
    </ligand>
</feature>
<feature type="binding site" evidence="1">
    <location>
        <position position="352"/>
    </location>
    <ligand>
        <name>[4Fe-4S] cluster</name>
        <dbReference type="ChEBI" id="CHEBI:49883"/>
    </ligand>
</feature>
<feature type="binding site" evidence="1">
    <location>
        <position position="355"/>
    </location>
    <ligand>
        <name>[4Fe-4S] cluster</name>
        <dbReference type="ChEBI" id="CHEBI:49883"/>
    </ligand>
</feature>
<sequence length="421" mass="44522">MGQTFAEQILGHASGRSDVQAGDMVVVNVDLVMMHDSLSPSIIETLHNELGAERVWDRDKVAVVIDHVAPAATVRQAEQQQQVRRWVAQQGISHLFDVGRGISHPVLIEEGLVQPGMLVVGSDSHSTGYGAAAAFGSGMGTTDIALALATGQTWFRVPETVRVNAVGNFQPGVSVKDFGLWAARTLRADGATYQSVEWHGVDFLSWRERMTLATLSIEVGAKAGIVAPTGLGAEHPVPEWLRVEADASYSRVVECDLSTLEPQVSVPHYVDNVVDLADVGRVAVDVVYLGTCTNGHYEDMAAAASILKGRRLAPNVRMIVVPASSESLHRAASDGTLATLLAAGATIGTPGCGACIGRHMGVLAPDEVCVFTGNRNFRGRMGSPGANIYLASPEVAAATAVTGYITHPRNVLDSTEQAVFA</sequence>
<comment type="function">
    <text evidence="1">Catalyzes the isomerization between 2-isopropylmalate and 3-isopropylmalate, via the formation of 2-isopropylmaleate.</text>
</comment>
<comment type="catalytic activity">
    <reaction evidence="1">
        <text>(2R,3S)-3-isopropylmalate = (2S)-2-isopropylmalate</text>
        <dbReference type="Rhea" id="RHEA:32287"/>
        <dbReference type="ChEBI" id="CHEBI:1178"/>
        <dbReference type="ChEBI" id="CHEBI:35121"/>
        <dbReference type="EC" id="4.2.1.33"/>
    </reaction>
</comment>
<comment type="cofactor">
    <cofactor evidence="1">
        <name>[4Fe-4S] cluster</name>
        <dbReference type="ChEBI" id="CHEBI:49883"/>
    </cofactor>
    <text evidence="1">Binds 1 [4Fe-4S] cluster per subunit.</text>
</comment>
<comment type="pathway">
    <text evidence="1">Amino-acid biosynthesis; L-leucine biosynthesis; L-leucine from 3-methyl-2-oxobutanoate: step 2/4.</text>
</comment>
<comment type="subunit">
    <text evidence="1">Heterodimer of LeuC and LeuD.</text>
</comment>
<comment type="similarity">
    <text evidence="1">Belongs to the aconitase/IPM isomerase family. LeuC type 2 subfamily.</text>
</comment>
<name>LEUC_HERA2</name>
<accession>A9B805</accession>
<reference key="1">
    <citation type="journal article" date="2011" name="Stand. Genomic Sci.">
        <title>Complete genome sequence of the filamentous gliding predatory bacterium Herpetosiphon aurantiacus type strain (114-95(T)).</title>
        <authorList>
            <person name="Kiss H."/>
            <person name="Nett M."/>
            <person name="Domin N."/>
            <person name="Martin K."/>
            <person name="Maresca J.A."/>
            <person name="Copeland A."/>
            <person name="Lapidus A."/>
            <person name="Lucas S."/>
            <person name="Berry K.W."/>
            <person name="Glavina Del Rio T."/>
            <person name="Dalin E."/>
            <person name="Tice H."/>
            <person name="Pitluck S."/>
            <person name="Richardson P."/>
            <person name="Bruce D."/>
            <person name="Goodwin L."/>
            <person name="Han C."/>
            <person name="Detter J.C."/>
            <person name="Schmutz J."/>
            <person name="Brettin T."/>
            <person name="Land M."/>
            <person name="Hauser L."/>
            <person name="Kyrpides N.C."/>
            <person name="Ivanova N."/>
            <person name="Goeker M."/>
            <person name="Woyke T."/>
            <person name="Klenk H.P."/>
            <person name="Bryant D.A."/>
        </authorList>
    </citation>
    <scope>NUCLEOTIDE SEQUENCE [LARGE SCALE GENOMIC DNA]</scope>
    <source>
        <strain>ATCC 23779 / DSM 785 / 114-95</strain>
    </source>
</reference>
<evidence type="ECO:0000255" key="1">
    <source>
        <dbReference type="HAMAP-Rule" id="MF_01027"/>
    </source>
</evidence>
<proteinExistence type="inferred from homology"/>
<protein>
    <recommendedName>
        <fullName evidence="1">3-isopropylmalate dehydratase large subunit</fullName>
        <ecNumber evidence="1">4.2.1.33</ecNumber>
    </recommendedName>
    <alternativeName>
        <fullName evidence="1">Alpha-IPM isomerase</fullName>
        <shortName evidence="1">IPMI</shortName>
    </alternativeName>
    <alternativeName>
        <fullName evidence="1">Isopropylmalate isomerase</fullName>
    </alternativeName>
</protein>
<gene>
    <name evidence="1" type="primary">leuC</name>
    <name type="ordered locus">Haur_3302</name>
</gene>
<keyword id="KW-0004">4Fe-4S</keyword>
<keyword id="KW-0028">Amino-acid biosynthesis</keyword>
<keyword id="KW-0100">Branched-chain amino acid biosynthesis</keyword>
<keyword id="KW-0408">Iron</keyword>
<keyword id="KW-0411">Iron-sulfur</keyword>
<keyword id="KW-0432">Leucine biosynthesis</keyword>
<keyword id="KW-0456">Lyase</keyword>
<keyword id="KW-0479">Metal-binding</keyword>